<feature type="chain" id="PRO_0000233220" description="Cytochrome b559 subunit alpha">
    <location>
        <begin position="1"/>
        <end position="82"/>
    </location>
</feature>
<feature type="transmembrane region" description="Helical" evidence="1">
    <location>
        <begin position="22"/>
        <end position="36"/>
    </location>
</feature>
<feature type="binding site" description="axial binding residue" evidence="1">
    <location>
        <position position="24"/>
    </location>
    <ligand>
        <name>heme</name>
        <dbReference type="ChEBI" id="CHEBI:30413"/>
        <note>ligand shared with beta subunit</note>
    </ligand>
    <ligandPart>
        <name>Fe</name>
        <dbReference type="ChEBI" id="CHEBI:18248"/>
    </ligandPart>
</feature>
<accession>Q46H81</accession>
<dbReference type="EMBL" id="CP000095">
    <property type="protein sequence ID" value="AAZ59151.1"/>
    <property type="molecule type" value="Genomic_DNA"/>
</dbReference>
<dbReference type="RefSeq" id="WP_011294296.1">
    <property type="nucleotide sequence ID" value="NC_007335.2"/>
</dbReference>
<dbReference type="SMR" id="Q46H81"/>
<dbReference type="STRING" id="59920.PMN2A_1663"/>
<dbReference type="KEGG" id="pmn:PMN2A_1663"/>
<dbReference type="HOGENOM" id="CLU_194095_0_0_3"/>
<dbReference type="OrthoDB" id="514620at2"/>
<dbReference type="PhylomeDB" id="Q46H81"/>
<dbReference type="Proteomes" id="UP000002535">
    <property type="component" value="Chromosome"/>
</dbReference>
<dbReference type="GO" id="GO:0009523">
    <property type="term" value="C:photosystem II"/>
    <property type="evidence" value="ECO:0007669"/>
    <property type="project" value="UniProtKB-KW"/>
</dbReference>
<dbReference type="GO" id="GO:0031676">
    <property type="term" value="C:plasma membrane-derived thylakoid membrane"/>
    <property type="evidence" value="ECO:0007669"/>
    <property type="project" value="UniProtKB-SubCell"/>
</dbReference>
<dbReference type="GO" id="GO:0009055">
    <property type="term" value="F:electron transfer activity"/>
    <property type="evidence" value="ECO:0007669"/>
    <property type="project" value="UniProtKB-UniRule"/>
</dbReference>
<dbReference type="GO" id="GO:0020037">
    <property type="term" value="F:heme binding"/>
    <property type="evidence" value="ECO:0007669"/>
    <property type="project" value="InterPro"/>
</dbReference>
<dbReference type="GO" id="GO:0005506">
    <property type="term" value="F:iron ion binding"/>
    <property type="evidence" value="ECO:0007669"/>
    <property type="project" value="UniProtKB-UniRule"/>
</dbReference>
<dbReference type="GO" id="GO:0009767">
    <property type="term" value="P:photosynthetic electron transport chain"/>
    <property type="evidence" value="ECO:0007669"/>
    <property type="project" value="InterPro"/>
</dbReference>
<dbReference type="Gene3D" id="1.20.5.860">
    <property type="entry name" value="Photosystem II cytochrome b559, alpha subunit"/>
    <property type="match status" value="1"/>
</dbReference>
<dbReference type="HAMAP" id="MF_00642">
    <property type="entry name" value="PSII_PsbE"/>
    <property type="match status" value="1"/>
</dbReference>
<dbReference type="InterPro" id="IPR006217">
    <property type="entry name" value="PSII_cyt_b559_asu"/>
</dbReference>
<dbReference type="InterPro" id="IPR037025">
    <property type="entry name" value="PSII_cyt_b559_asu_sf"/>
</dbReference>
<dbReference type="InterPro" id="IPR013081">
    <property type="entry name" value="PSII_cyt_b559_N"/>
</dbReference>
<dbReference type="InterPro" id="IPR013082">
    <property type="entry name" value="PSII_cytb559_asu_lum"/>
</dbReference>
<dbReference type="NCBIfam" id="TIGR01332">
    <property type="entry name" value="cyt_b559_alpha"/>
    <property type="match status" value="1"/>
</dbReference>
<dbReference type="PANTHER" id="PTHR33391">
    <property type="entry name" value="CYTOCHROME B559 SUBUNIT BETA-RELATED"/>
    <property type="match status" value="1"/>
</dbReference>
<dbReference type="PANTHER" id="PTHR33391:SF9">
    <property type="entry name" value="CYTOCHROME B559 SUBUNIT BETA-RELATED"/>
    <property type="match status" value="1"/>
</dbReference>
<dbReference type="Pfam" id="PF00283">
    <property type="entry name" value="Cytochrom_B559"/>
    <property type="match status" value="1"/>
</dbReference>
<dbReference type="Pfam" id="PF00284">
    <property type="entry name" value="Cytochrom_B559a"/>
    <property type="match status" value="1"/>
</dbReference>
<dbReference type="PIRSF" id="PIRSF000036">
    <property type="entry name" value="PsbE"/>
    <property type="match status" value="1"/>
</dbReference>
<dbReference type="SUPFAM" id="SSF161045">
    <property type="entry name" value="Cytochrome b559 subunits"/>
    <property type="match status" value="1"/>
</dbReference>
<evidence type="ECO:0000255" key="1">
    <source>
        <dbReference type="HAMAP-Rule" id="MF_00642"/>
    </source>
</evidence>
<evidence type="ECO:0000305" key="2"/>
<proteinExistence type="inferred from homology"/>
<organism>
    <name type="scientific">Prochlorococcus marinus (strain NATL2A)</name>
    <dbReference type="NCBI Taxonomy" id="59920"/>
    <lineage>
        <taxon>Bacteria</taxon>
        <taxon>Bacillati</taxon>
        <taxon>Cyanobacteriota</taxon>
        <taxon>Cyanophyceae</taxon>
        <taxon>Synechococcales</taxon>
        <taxon>Prochlorococcaceae</taxon>
        <taxon>Prochlorococcus</taxon>
    </lineage>
</organism>
<sequence length="82" mass="9001">MAAGSTGERPFFEIITSVRYWIIHAVALPAIFVAGFLFVSSGLAYDAFGTPRPDTYFQAGESKAPVVVQRFDSKAELDTRLK</sequence>
<protein>
    <recommendedName>
        <fullName evidence="1">Cytochrome b559 subunit alpha</fullName>
    </recommendedName>
    <alternativeName>
        <fullName evidence="1">PSII reaction center subunit V</fullName>
    </alternativeName>
</protein>
<name>PSBE_PROMT</name>
<comment type="function">
    <text evidence="1">This b-type cytochrome is tightly associated with the reaction center of photosystem II (PSII). PSII is a light-driven water:plastoquinone oxidoreductase that uses light energy to abstract electrons from H(2)O, generating O(2) and a proton gradient subsequently used for ATP formation. It consists of a core antenna complex that captures photons, and an electron transfer chain that converts photonic excitation into a charge separation.</text>
</comment>
<comment type="cofactor">
    <cofactor evidence="1">
        <name>heme b</name>
        <dbReference type="ChEBI" id="CHEBI:60344"/>
    </cofactor>
    <text evidence="1">With its partner (PsbF) binds heme. PSII binds additional chlorophylls, carotenoids and specific lipids.</text>
</comment>
<comment type="subunit">
    <text evidence="2">Heterodimer of an alpha subunit and a beta subunit. PSII is composed of 1 copy each of membrane proteins PsbA, PsbB, PsbC, PsbD, PsbE, PsbF, PsbH, PsbI, PsbJ, PsbK, PsbL, PsbM, PsbT, PsbX, PsbY, Psb30/Ycf12, peripheral proteins PsbO, CyanoQ (PsbQ), PsbU, PsbV and a large number of cofactors. It forms dimeric complexes.</text>
</comment>
<comment type="subcellular location">
    <subcellularLocation>
        <location evidence="1">Cellular thylakoid membrane</location>
        <topology evidence="1">Single-pass membrane protein</topology>
    </subcellularLocation>
</comment>
<comment type="similarity">
    <text evidence="1">Belongs to the PsbE/PsbF family.</text>
</comment>
<reference key="1">
    <citation type="journal article" date="2007" name="PLoS Genet.">
        <title>Patterns and implications of gene gain and loss in the evolution of Prochlorococcus.</title>
        <authorList>
            <person name="Kettler G.C."/>
            <person name="Martiny A.C."/>
            <person name="Huang K."/>
            <person name="Zucker J."/>
            <person name="Coleman M.L."/>
            <person name="Rodrigue S."/>
            <person name="Chen F."/>
            <person name="Lapidus A."/>
            <person name="Ferriera S."/>
            <person name="Johnson J."/>
            <person name="Steglich C."/>
            <person name="Church G.M."/>
            <person name="Richardson P."/>
            <person name="Chisholm S.W."/>
        </authorList>
    </citation>
    <scope>NUCLEOTIDE SEQUENCE [LARGE SCALE GENOMIC DNA]</scope>
    <source>
        <strain>NATL2A</strain>
    </source>
</reference>
<keyword id="KW-0249">Electron transport</keyword>
<keyword id="KW-0349">Heme</keyword>
<keyword id="KW-0408">Iron</keyword>
<keyword id="KW-0472">Membrane</keyword>
<keyword id="KW-0479">Metal-binding</keyword>
<keyword id="KW-0602">Photosynthesis</keyword>
<keyword id="KW-0604">Photosystem II</keyword>
<keyword id="KW-1185">Reference proteome</keyword>
<keyword id="KW-0793">Thylakoid</keyword>
<keyword id="KW-0812">Transmembrane</keyword>
<keyword id="KW-1133">Transmembrane helix</keyword>
<keyword id="KW-0813">Transport</keyword>
<gene>
    <name evidence="1" type="primary">psbE</name>
    <name type="ordered locus">PMN2A_1663</name>
</gene>